<keyword id="KW-0276">Fatty acid metabolism</keyword>
<keyword id="KW-0413">Isomerase</keyword>
<keyword id="KW-0442">Lipid degradation</keyword>
<keyword id="KW-0443">Lipid metabolism</keyword>
<keyword id="KW-0456">Lyase</keyword>
<keyword id="KW-0511">Multifunctional enzyme</keyword>
<keyword id="KW-0520">NAD</keyword>
<keyword id="KW-0560">Oxidoreductase</keyword>
<keyword id="KW-1185">Reference proteome</keyword>
<comment type="function">
    <text evidence="1">Involved in the aerobic and anaerobic degradation of long-chain fatty acids via beta-oxidation cycle. Catalyzes the formation of 3-oxoacyl-CoA from enoyl-CoA via L-3-hydroxyacyl-CoA. It can also use D-3-hydroxyacyl-CoA and cis-3-enoyl-CoA as substrate.</text>
</comment>
<comment type="catalytic activity">
    <reaction evidence="1">
        <text>a (3S)-3-hydroxyacyl-CoA + NAD(+) = a 3-oxoacyl-CoA + NADH + H(+)</text>
        <dbReference type="Rhea" id="RHEA:22432"/>
        <dbReference type="ChEBI" id="CHEBI:15378"/>
        <dbReference type="ChEBI" id="CHEBI:57318"/>
        <dbReference type="ChEBI" id="CHEBI:57540"/>
        <dbReference type="ChEBI" id="CHEBI:57945"/>
        <dbReference type="ChEBI" id="CHEBI:90726"/>
        <dbReference type="EC" id="1.1.1.35"/>
    </reaction>
</comment>
<comment type="catalytic activity">
    <reaction evidence="1">
        <text>a (3S)-3-hydroxyacyl-CoA = a (2E)-enoyl-CoA + H2O</text>
        <dbReference type="Rhea" id="RHEA:16105"/>
        <dbReference type="ChEBI" id="CHEBI:15377"/>
        <dbReference type="ChEBI" id="CHEBI:57318"/>
        <dbReference type="ChEBI" id="CHEBI:58856"/>
        <dbReference type="EC" id="4.2.1.17"/>
    </reaction>
</comment>
<comment type="catalytic activity">
    <reaction evidence="1">
        <text>a 4-saturated-(3S)-3-hydroxyacyl-CoA = a (3E)-enoyl-CoA + H2O</text>
        <dbReference type="Rhea" id="RHEA:20724"/>
        <dbReference type="ChEBI" id="CHEBI:15377"/>
        <dbReference type="ChEBI" id="CHEBI:58521"/>
        <dbReference type="ChEBI" id="CHEBI:137480"/>
        <dbReference type="EC" id="4.2.1.17"/>
    </reaction>
</comment>
<comment type="catalytic activity">
    <reaction evidence="1">
        <text>(3S)-3-hydroxybutanoyl-CoA = (3R)-3-hydroxybutanoyl-CoA</text>
        <dbReference type="Rhea" id="RHEA:21760"/>
        <dbReference type="ChEBI" id="CHEBI:57315"/>
        <dbReference type="ChEBI" id="CHEBI:57316"/>
        <dbReference type="EC" id="5.1.2.3"/>
    </reaction>
</comment>
<comment type="catalytic activity">
    <reaction evidence="1">
        <text>a (3Z)-enoyl-CoA = a 4-saturated (2E)-enoyl-CoA</text>
        <dbReference type="Rhea" id="RHEA:45900"/>
        <dbReference type="ChEBI" id="CHEBI:85097"/>
        <dbReference type="ChEBI" id="CHEBI:85489"/>
        <dbReference type="EC" id="5.3.3.8"/>
    </reaction>
</comment>
<comment type="catalytic activity">
    <reaction evidence="1">
        <text>a (3E)-enoyl-CoA = a 4-saturated (2E)-enoyl-CoA</text>
        <dbReference type="Rhea" id="RHEA:45228"/>
        <dbReference type="ChEBI" id="CHEBI:58521"/>
        <dbReference type="ChEBI" id="CHEBI:85097"/>
        <dbReference type="EC" id="5.3.3.8"/>
    </reaction>
</comment>
<comment type="pathway">
    <text evidence="1">Lipid metabolism; fatty acid beta-oxidation.</text>
</comment>
<comment type="subunit">
    <text evidence="1">Heterotetramer of two alpha chains (FadB) and two beta chains (FadA).</text>
</comment>
<comment type="similarity">
    <text evidence="1">In the N-terminal section; belongs to the enoyl-CoA hydratase/isomerase family.</text>
</comment>
<comment type="similarity">
    <text evidence="1">In the C-terminal section; belongs to the 3-hydroxyacyl-CoA dehydrogenase family.</text>
</comment>
<dbReference type="EC" id="4.2.1.17" evidence="1"/>
<dbReference type="EC" id="5.1.2.3" evidence="1"/>
<dbReference type="EC" id="5.3.3.8" evidence="1"/>
<dbReference type="EC" id="1.1.1.35" evidence="1"/>
<dbReference type="EMBL" id="AE005174">
    <property type="protein sequence ID" value="AAG59040.1"/>
    <property type="molecule type" value="Genomic_DNA"/>
</dbReference>
<dbReference type="EMBL" id="BA000007">
    <property type="protein sequence ID" value="BAB38197.1"/>
    <property type="molecule type" value="Genomic_DNA"/>
</dbReference>
<dbReference type="PIR" id="D86072">
    <property type="entry name" value="D86072"/>
</dbReference>
<dbReference type="PIR" id="F91225">
    <property type="entry name" value="F91225"/>
</dbReference>
<dbReference type="RefSeq" id="NP_312801.1">
    <property type="nucleotide sequence ID" value="NC_002695.1"/>
</dbReference>
<dbReference type="RefSeq" id="WP_000965903.1">
    <property type="nucleotide sequence ID" value="NZ_VOAI01000017.1"/>
</dbReference>
<dbReference type="SMR" id="Q8X8I2"/>
<dbReference type="STRING" id="155864.Z5367"/>
<dbReference type="GeneID" id="915128"/>
<dbReference type="KEGG" id="ece:Z5367"/>
<dbReference type="KEGG" id="ecs:ECs_4774"/>
<dbReference type="PATRIC" id="fig|386585.9.peg.4983"/>
<dbReference type="eggNOG" id="COG1024">
    <property type="taxonomic scope" value="Bacteria"/>
</dbReference>
<dbReference type="eggNOG" id="COG1250">
    <property type="taxonomic scope" value="Bacteria"/>
</dbReference>
<dbReference type="HOGENOM" id="CLU_009834_16_3_6"/>
<dbReference type="OMA" id="YNGAAMG"/>
<dbReference type="UniPathway" id="UPA00659"/>
<dbReference type="Proteomes" id="UP000000558">
    <property type="component" value="Chromosome"/>
</dbReference>
<dbReference type="Proteomes" id="UP000002519">
    <property type="component" value="Chromosome"/>
</dbReference>
<dbReference type="GO" id="GO:0036125">
    <property type="term" value="C:fatty acid beta-oxidation multienzyme complex"/>
    <property type="evidence" value="ECO:0007669"/>
    <property type="project" value="InterPro"/>
</dbReference>
<dbReference type="GO" id="GO:0008692">
    <property type="term" value="F:3-hydroxybutyryl-CoA epimerase activity"/>
    <property type="evidence" value="ECO:0007669"/>
    <property type="project" value="UniProtKB-UniRule"/>
</dbReference>
<dbReference type="GO" id="GO:0004165">
    <property type="term" value="F:delta(3)-delta(2)-enoyl-CoA isomerase activity"/>
    <property type="evidence" value="ECO:0007669"/>
    <property type="project" value="UniProtKB-UniRule"/>
</dbReference>
<dbReference type="GO" id="GO:0004300">
    <property type="term" value="F:enoyl-CoA hydratase activity"/>
    <property type="evidence" value="ECO:0007669"/>
    <property type="project" value="UniProtKB-UniRule"/>
</dbReference>
<dbReference type="GO" id="GO:0016509">
    <property type="term" value="F:long-chain-3-hydroxyacyl-CoA dehydrogenase activity"/>
    <property type="evidence" value="ECO:0007669"/>
    <property type="project" value="TreeGrafter"/>
</dbReference>
<dbReference type="GO" id="GO:0070403">
    <property type="term" value="F:NAD+ binding"/>
    <property type="evidence" value="ECO:0007669"/>
    <property type="project" value="InterPro"/>
</dbReference>
<dbReference type="GO" id="GO:0006635">
    <property type="term" value="P:fatty acid beta-oxidation"/>
    <property type="evidence" value="ECO:0007669"/>
    <property type="project" value="UniProtKB-UniRule"/>
</dbReference>
<dbReference type="CDD" id="cd06558">
    <property type="entry name" value="crotonase-like"/>
    <property type="match status" value="1"/>
</dbReference>
<dbReference type="FunFam" id="1.10.1040.50:FF:000001">
    <property type="entry name" value="Fatty acid oxidation complex subunit alpha"/>
    <property type="match status" value="1"/>
</dbReference>
<dbReference type="FunFam" id="3.90.226.10:FF:000018">
    <property type="entry name" value="Fatty acid oxidation complex subunit alpha"/>
    <property type="match status" value="1"/>
</dbReference>
<dbReference type="FunFam" id="3.40.50.720:FF:000009">
    <property type="entry name" value="Fatty oxidation complex, alpha subunit"/>
    <property type="match status" value="1"/>
</dbReference>
<dbReference type="Gene3D" id="1.10.1040.50">
    <property type="match status" value="1"/>
</dbReference>
<dbReference type="Gene3D" id="3.90.226.10">
    <property type="entry name" value="2-enoyl-CoA Hydratase, Chain A, domain 1"/>
    <property type="match status" value="1"/>
</dbReference>
<dbReference type="Gene3D" id="3.40.50.720">
    <property type="entry name" value="NAD(P)-binding Rossmann-like Domain"/>
    <property type="match status" value="1"/>
</dbReference>
<dbReference type="HAMAP" id="MF_01621">
    <property type="entry name" value="FadB"/>
    <property type="match status" value="1"/>
</dbReference>
<dbReference type="InterPro" id="IPR006180">
    <property type="entry name" value="3-OHacyl-CoA_DH_CS"/>
</dbReference>
<dbReference type="InterPro" id="IPR006176">
    <property type="entry name" value="3-OHacyl-CoA_DH_NAD-bd"/>
</dbReference>
<dbReference type="InterPro" id="IPR006108">
    <property type="entry name" value="3HC_DH_C"/>
</dbReference>
<dbReference type="InterPro" id="IPR008927">
    <property type="entry name" value="6-PGluconate_DH-like_C_sf"/>
</dbReference>
<dbReference type="InterPro" id="IPR029045">
    <property type="entry name" value="ClpP/crotonase-like_dom_sf"/>
</dbReference>
<dbReference type="InterPro" id="IPR018376">
    <property type="entry name" value="Enoyl-CoA_hyd/isom_CS"/>
</dbReference>
<dbReference type="InterPro" id="IPR001753">
    <property type="entry name" value="Enoyl-CoA_hydra/iso"/>
</dbReference>
<dbReference type="InterPro" id="IPR050136">
    <property type="entry name" value="FA_oxidation_alpha_subunit"/>
</dbReference>
<dbReference type="InterPro" id="IPR012799">
    <property type="entry name" value="FadB"/>
</dbReference>
<dbReference type="InterPro" id="IPR036291">
    <property type="entry name" value="NAD(P)-bd_dom_sf"/>
</dbReference>
<dbReference type="NCBIfam" id="TIGR02437">
    <property type="entry name" value="FadB"/>
    <property type="match status" value="1"/>
</dbReference>
<dbReference type="NCBIfam" id="NF008727">
    <property type="entry name" value="PRK11730.1"/>
    <property type="match status" value="1"/>
</dbReference>
<dbReference type="PANTHER" id="PTHR43612">
    <property type="entry name" value="TRIFUNCTIONAL ENZYME SUBUNIT ALPHA"/>
    <property type="match status" value="1"/>
</dbReference>
<dbReference type="PANTHER" id="PTHR43612:SF3">
    <property type="entry name" value="TRIFUNCTIONAL ENZYME SUBUNIT ALPHA, MITOCHONDRIAL"/>
    <property type="match status" value="1"/>
</dbReference>
<dbReference type="Pfam" id="PF00725">
    <property type="entry name" value="3HCDH"/>
    <property type="match status" value="2"/>
</dbReference>
<dbReference type="Pfam" id="PF02737">
    <property type="entry name" value="3HCDH_N"/>
    <property type="match status" value="1"/>
</dbReference>
<dbReference type="Pfam" id="PF00378">
    <property type="entry name" value="ECH_1"/>
    <property type="match status" value="1"/>
</dbReference>
<dbReference type="SUPFAM" id="SSF48179">
    <property type="entry name" value="6-phosphogluconate dehydrogenase C-terminal domain-like"/>
    <property type="match status" value="2"/>
</dbReference>
<dbReference type="SUPFAM" id="SSF52096">
    <property type="entry name" value="ClpP/crotonase"/>
    <property type="match status" value="1"/>
</dbReference>
<dbReference type="SUPFAM" id="SSF51735">
    <property type="entry name" value="NAD(P)-binding Rossmann-fold domains"/>
    <property type="match status" value="1"/>
</dbReference>
<dbReference type="PROSITE" id="PS00067">
    <property type="entry name" value="3HCDH"/>
    <property type="match status" value="1"/>
</dbReference>
<dbReference type="PROSITE" id="PS00166">
    <property type="entry name" value="ENOYL_COA_HYDRATASE"/>
    <property type="match status" value="1"/>
</dbReference>
<feature type="chain" id="PRO_0000109269" description="Fatty acid oxidation complex subunit alpha">
    <location>
        <begin position="1"/>
        <end position="729"/>
    </location>
</feature>
<feature type="region of interest" description="Enoyl-CoA hydratase/isomerase" evidence="1">
    <location>
        <begin position="1"/>
        <end position="189"/>
    </location>
</feature>
<feature type="region of interest" description="3-hydroxyacyl-CoA dehydrogenase" evidence="1">
    <location>
        <begin position="311"/>
        <end position="729"/>
    </location>
</feature>
<feature type="region of interest" description="Disordered" evidence="2">
    <location>
        <begin position="708"/>
        <end position="729"/>
    </location>
</feature>
<feature type="active site" description="For 3-hydroxyacyl-CoA dehydrogenase activity" evidence="1">
    <location>
        <position position="450"/>
    </location>
</feature>
<feature type="binding site" evidence="1">
    <location>
        <position position="296"/>
    </location>
    <ligand>
        <name>substrate</name>
    </ligand>
</feature>
<feature type="binding site" evidence="1">
    <location>
        <position position="324"/>
    </location>
    <ligand>
        <name>NAD(+)</name>
        <dbReference type="ChEBI" id="CHEBI:57540"/>
    </ligand>
</feature>
<feature type="binding site" evidence="1">
    <location>
        <position position="343"/>
    </location>
    <ligand>
        <name>NAD(+)</name>
        <dbReference type="ChEBI" id="CHEBI:57540"/>
    </ligand>
</feature>
<feature type="binding site" evidence="1">
    <location>
        <begin position="400"/>
        <end position="402"/>
    </location>
    <ligand>
        <name>NAD(+)</name>
        <dbReference type="ChEBI" id="CHEBI:57540"/>
    </ligand>
</feature>
<feature type="binding site" evidence="1">
    <location>
        <position position="407"/>
    </location>
    <ligand>
        <name>NAD(+)</name>
        <dbReference type="ChEBI" id="CHEBI:57540"/>
    </ligand>
</feature>
<feature type="binding site" evidence="1">
    <location>
        <position position="429"/>
    </location>
    <ligand>
        <name>NAD(+)</name>
        <dbReference type="ChEBI" id="CHEBI:57540"/>
    </ligand>
</feature>
<feature type="binding site" evidence="1">
    <location>
        <position position="453"/>
    </location>
    <ligand>
        <name>NAD(+)</name>
        <dbReference type="ChEBI" id="CHEBI:57540"/>
    </ligand>
</feature>
<feature type="binding site" evidence="1">
    <location>
        <position position="500"/>
    </location>
    <ligand>
        <name>substrate</name>
    </ligand>
</feature>
<feature type="binding site" evidence="1">
    <location>
        <position position="660"/>
    </location>
    <ligand>
        <name>substrate</name>
    </ligand>
</feature>
<feature type="site" description="Important for catalytic activity" evidence="1">
    <location>
        <position position="119"/>
    </location>
</feature>
<feature type="site" description="Important for catalytic activity" evidence="1">
    <location>
        <position position="139"/>
    </location>
</feature>
<name>FADB_ECO57</name>
<protein>
    <recommendedName>
        <fullName evidence="1">Fatty acid oxidation complex subunit alpha</fullName>
    </recommendedName>
    <domain>
        <recommendedName>
            <fullName evidence="1">Enoyl-CoA hydratase/Delta(3)-cis-Delta(2)-trans-enoyl-CoA isomerase/3-hydroxybutyryl-CoA epimerase</fullName>
            <ecNumber evidence="1">4.2.1.17</ecNumber>
            <ecNumber evidence="1">5.1.2.3</ecNumber>
            <ecNumber evidence="1">5.3.3.8</ecNumber>
        </recommendedName>
    </domain>
    <domain>
        <recommendedName>
            <fullName evidence="1">3-hydroxyacyl-CoA dehydrogenase</fullName>
            <ecNumber evidence="1">1.1.1.35</ecNumber>
        </recommendedName>
    </domain>
</protein>
<organism>
    <name type="scientific">Escherichia coli O157:H7</name>
    <dbReference type="NCBI Taxonomy" id="83334"/>
    <lineage>
        <taxon>Bacteria</taxon>
        <taxon>Pseudomonadati</taxon>
        <taxon>Pseudomonadota</taxon>
        <taxon>Gammaproteobacteria</taxon>
        <taxon>Enterobacterales</taxon>
        <taxon>Enterobacteriaceae</taxon>
        <taxon>Escherichia</taxon>
    </lineage>
</organism>
<evidence type="ECO:0000255" key="1">
    <source>
        <dbReference type="HAMAP-Rule" id="MF_01621"/>
    </source>
</evidence>
<evidence type="ECO:0000256" key="2">
    <source>
        <dbReference type="SAM" id="MobiDB-lite"/>
    </source>
</evidence>
<accession>Q8X8I2</accession>
<gene>
    <name evidence="1" type="primary">fadB</name>
    <name type="synonym">oldB</name>
    <name type="ordered locus">Z5367</name>
    <name type="ordered locus">ECs4774</name>
</gene>
<reference key="1">
    <citation type="journal article" date="2001" name="Nature">
        <title>Genome sequence of enterohaemorrhagic Escherichia coli O157:H7.</title>
        <authorList>
            <person name="Perna N.T."/>
            <person name="Plunkett G. III"/>
            <person name="Burland V."/>
            <person name="Mau B."/>
            <person name="Glasner J.D."/>
            <person name="Rose D.J."/>
            <person name="Mayhew G.F."/>
            <person name="Evans P.S."/>
            <person name="Gregor J."/>
            <person name="Kirkpatrick H.A."/>
            <person name="Posfai G."/>
            <person name="Hackett J."/>
            <person name="Klink S."/>
            <person name="Boutin A."/>
            <person name="Shao Y."/>
            <person name="Miller L."/>
            <person name="Grotbeck E.J."/>
            <person name="Davis N.W."/>
            <person name="Lim A."/>
            <person name="Dimalanta E.T."/>
            <person name="Potamousis K."/>
            <person name="Apodaca J."/>
            <person name="Anantharaman T.S."/>
            <person name="Lin J."/>
            <person name="Yen G."/>
            <person name="Schwartz D.C."/>
            <person name="Welch R.A."/>
            <person name="Blattner F.R."/>
        </authorList>
    </citation>
    <scope>NUCLEOTIDE SEQUENCE [LARGE SCALE GENOMIC DNA]</scope>
    <source>
        <strain>O157:H7 / EDL933 / ATCC 700927 / EHEC</strain>
    </source>
</reference>
<reference key="2">
    <citation type="journal article" date="2001" name="DNA Res.">
        <title>Complete genome sequence of enterohemorrhagic Escherichia coli O157:H7 and genomic comparison with a laboratory strain K-12.</title>
        <authorList>
            <person name="Hayashi T."/>
            <person name="Makino K."/>
            <person name="Ohnishi M."/>
            <person name="Kurokawa K."/>
            <person name="Ishii K."/>
            <person name="Yokoyama K."/>
            <person name="Han C.-G."/>
            <person name="Ohtsubo E."/>
            <person name="Nakayama K."/>
            <person name="Murata T."/>
            <person name="Tanaka M."/>
            <person name="Tobe T."/>
            <person name="Iida T."/>
            <person name="Takami H."/>
            <person name="Honda T."/>
            <person name="Sasakawa C."/>
            <person name="Ogasawara N."/>
            <person name="Yasunaga T."/>
            <person name="Kuhara S."/>
            <person name="Shiba T."/>
            <person name="Hattori M."/>
            <person name="Shinagawa H."/>
        </authorList>
    </citation>
    <scope>NUCLEOTIDE SEQUENCE [LARGE SCALE GENOMIC DNA]</scope>
    <source>
        <strain>O157:H7 / Sakai / RIMD 0509952 / EHEC</strain>
    </source>
</reference>
<proteinExistence type="inferred from homology"/>
<sequence>MLYKGDTLYLDWLEDGIAELVFDAPGSVNKLDTATVASLGEAIGVLEQQSDLKGLLLRSNKAAFIVGADITEFLSLFLVPEEQLSQWLHFANSVFNRLEDLPVPTIAAVNGYALGGGCECVLATDYRLATPDLRIGLPETKLGIMPGFGGSVRMPRMLGADSALEIIAAGKDVGADQALKIGLVDGVVKAEKLIEGAMAILRQAINGDLDWKAKRQPKLEPLKLSKIEATMSFTIAKGMVAQTAGKHYPAPITAVKTIEAAARFGREEALNLENKSFVPLAHTNEARALVGIFLNDQYVKGKAKKLTKDVETPKQAAVLGAGIMGGGIAYQSAWKGVPVIMKDINDKSLALGMTEAAKLLNKQLERGKIDGLKLAGVISTIHPTLDYAGFERVDVVVEAIVENPKVKKAVLAETEQKVRPDTVLASNTSTIPISELANALERPENFCGMHFFNPVHRMPLVEIIRGEKSSDETIAKVVAWASKMGKTPIVVNDCPGFFVNRVLFPYFAGFSQLLRDGADFRKIDKVMEKQFGWPMGPAYLLDVVGIDTAHHAQAVMAAGFPQRMQKDYRDAIDALFDANRFGQKNGLGFWHYKEDSKGKPKKEEDAAVDDLLAEVSQPKRDFSEEEIIARMMIPMVNEVVRCLEEGIIATPAEADMALVYGLGFPPFHGGAFRWLDTLGSAKYLDMAQQYQHLGPLYEVPEGLRNKARHNEPYYPPVEPARPVGDLKTA</sequence>